<protein>
    <recommendedName>
        <fullName>Ribosomal RNA small subunit methyltransferase E</fullName>
        <ecNumber>2.1.1.193</ecNumber>
    </recommendedName>
    <alternativeName>
        <fullName>16S rRNA m3U1498 methyltransferase</fullName>
    </alternativeName>
</protein>
<reference key="1">
    <citation type="journal article" date="1996" name="DNA Res.">
        <title>Sequence analysis of the genome of the unicellular cyanobacterium Synechocystis sp. strain PCC6803. II. Sequence determination of the entire genome and assignment of potential protein-coding regions.</title>
        <authorList>
            <person name="Kaneko T."/>
            <person name="Sato S."/>
            <person name="Kotani H."/>
            <person name="Tanaka A."/>
            <person name="Asamizu E."/>
            <person name="Nakamura Y."/>
            <person name="Miyajima N."/>
            <person name="Hirosawa M."/>
            <person name="Sugiura M."/>
            <person name="Sasamoto S."/>
            <person name="Kimura T."/>
            <person name="Hosouchi T."/>
            <person name="Matsuno A."/>
            <person name="Muraki A."/>
            <person name="Nakazaki N."/>
            <person name="Naruo K."/>
            <person name="Okumura S."/>
            <person name="Shimpo S."/>
            <person name="Takeuchi C."/>
            <person name="Wada T."/>
            <person name="Watanabe A."/>
            <person name="Yamada M."/>
            <person name="Yasuda M."/>
            <person name="Tabata S."/>
        </authorList>
    </citation>
    <scope>NUCLEOTIDE SEQUENCE [LARGE SCALE GENOMIC DNA]</scope>
    <source>
        <strain>ATCC 27184 / PCC 6803 / Kazusa</strain>
    </source>
</reference>
<name>RSME_SYNY3</name>
<keyword id="KW-0963">Cytoplasm</keyword>
<keyword id="KW-0489">Methyltransferase</keyword>
<keyword id="KW-1185">Reference proteome</keyword>
<keyword id="KW-0698">rRNA processing</keyword>
<keyword id="KW-0949">S-adenosyl-L-methionine</keyword>
<keyword id="KW-0808">Transferase</keyword>
<proteinExistence type="inferred from homology"/>
<organism>
    <name type="scientific">Synechocystis sp. (strain ATCC 27184 / PCC 6803 / Kazusa)</name>
    <dbReference type="NCBI Taxonomy" id="1111708"/>
    <lineage>
        <taxon>Bacteria</taxon>
        <taxon>Bacillati</taxon>
        <taxon>Cyanobacteriota</taxon>
        <taxon>Cyanophyceae</taxon>
        <taxon>Synechococcales</taxon>
        <taxon>Merismopediaceae</taxon>
        <taxon>Synechocystis</taxon>
    </lineage>
</organism>
<comment type="function">
    <text evidence="1">Specifically methylates the N3 position of the uracil ring of uridine 1498 (m3U1498) in 16S rRNA. Acts on the fully assembled 30S ribosomal subunit (By similarity).</text>
</comment>
<comment type="catalytic activity">
    <reaction>
        <text>uridine(1498) in 16S rRNA + S-adenosyl-L-methionine = N(3)-methyluridine(1498) in 16S rRNA + S-adenosyl-L-homocysteine + H(+)</text>
        <dbReference type="Rhea" id="RHEA:42920"/>
        <dbReference type="Rhea" id="RHEA-COMP:10283"/>
        <dbReference type="Rhea" id="RHEA-COMP:10284"/>
        <dbReference type="ChEBI" id="CHEBI:15378"/>
        <dbReference type="ChEBI" id="CHEBI:57856"/>
        <dbReference type="ChEBI" id="CHEBI:59789"/>
        <dbReference type="ChEBI" id="CHEBI:65315"/>
        <dbReference type="ChEBI" id="CHEBI:74502"/>
        <dbReference type="EC" id="2.1.1.193"/>
    </reaction>
</comment>
<comment type="subcellular location">
    <subcellularLocation>
        <location evidence="1">Cytoplasm</location>
    </subcellularLocation>
</comment>
<comment type="similarity">
    <text evidence="2">Belongs to the RNA methyltransferase RsmE family.</text>
</comment>
<gene>
    <name type="primary">rsmE</name>
    <name type="ordered locus">slr0722</name>
</gene>
<sequence>MLAKAFAGSKSHKILINAWFTTLPGQCQKPIVQFVLSPILVSTNLTPSILSLPVQEKSSSSFVMAYRLVVAPEQIIEATVTLTTAQLHYLQRVLRLQKGDGFMVLDGGGGVWRAQLNDLAHGTAQLLETVSEQNELPLPVTLAIALPKGSGFEEIIRPCTELGATAFQPLLTERTLLKPSQNKLERWQRIVTEAAEQSERQWLPPVAAPLTFGQFVEKVAGPETLALLCVTRLNSPMLGAYLKQSNLPAQIVLATGPEGGWTDNEISLAIAKGFQPVSLGKRILRAVTAPTVALAQINALLES</sequence>
<evidence type="ECO:0000250" key="1"/>
<evidence type="ECO:0000305" key="2"/>
<feature type="chain" id="PRO_0000176217" description="Ribosomal RNA small subunit methyltransferase E">
    <location>
        <begin position="1"/>
        <end position="303"/>
    </location>
</feature>
<dbReference type="EC" id="2.1.1.193"/>
<dbReference type="EMBL" id="BA000022">
    <property type="protein sequence ID" value="BAA16669.1"/>
    <property type="molecule type" value="Genomic_DNA"/>
</dbReference>
<dbReference type="PIR" id="S74517">
    <property type="entry name" value="S74517"/>
</dbReference>
<dbReference type="SMR" id="P72667"/>
<dbReference type="FunCoup" id="P72667">
    <property type="interactions" value="408"/>
</dbReference>
<dbReference type="IntAct" id="P72667">
    <property type="interactions" value="3"/>
</dbReference>
<dbReference type="STRING" id="1148.gene:10497524"/>
<dbReference type="PaxDb" id="1148-1651741"/>
<dbReference type="EnsemblBacteria" id="BAA16669">
    <property type="protein sequence ID" value="BAA16669"/>
    <property type="gene ID" value="BAA16669"/>
</dbReference>
<dbReference type="KEGG" id="syn:slr0722"/>
<dbReference type="eggNOG" id="COG1385">
    <property type="taxonomic scope" value="Bacteria"/>
</dbReference>
<dbReference type="InParanoid" id="P72667"/>
<dbReference type="PhylomeDB" id="P72667"/>
<dbReference type="Proteomes" id="UP000001425">
    <property type="component" value="Chromosome"/>
</dbReference>
<dbReference type="GO" id="GO:0005737">
    <property type="term" value="C:cytoplasm"/>
    <property type="evidence" value="ECO:0007669"/>
    <property type="project" value="UniProtKB-SubCell"/>
</dbReference>
<dbReference type="GO" id="GO:0016301">
    <property type="term" value="F:kinase activity"/>
    <property type="evidence" value="ECO:0007669"/>
    <property type="project" value="InterPro"/>
</dbReference>
<dbReference type="GO" id="GO:0070042">
    <property type="term" value="F:rRNA (uridine-N3-)-methyltransferase activity"/>
    <property type="evidence" value="ECO:0000318"/>
    <property type="project" value="GO_Central"/>
</dbReference>
<dbReference type="GO" id="GO:0070475">
    <property type="term" value="P:rRNA base methylation"/>
    <property type="evidence" value="ECO:0000318"/>
    <property type="project" value="GO_Central"/>
</dbReference>
<dbReference type="CDD" id="cd18084">
    <property type="entry name" value="RsmE-like"/>
    <property type="match status" value="1"/>
</dbReference>
<dbReference type="FunFam" id="3.40.1280.10:FF:000020">
    <property type="entry name" value="Ribosomal RNA small subunit methyltransferase E"/>
    <property type="match status" value="1"/>
</dbReference>
<dbReference type="Gene3D" id="3.40.1280.10">
    <property type="match status" value="1"/>
</dbReference>
<dbReference type="InterPro" id="IPR029028">
    <property type="entry name" value="Alpha/beta_knot_MTases"/>
</dbReference>
<dbReference type="InterPro" id="IPR001206">
    <property type="entry name" value="Diacylglycerol_kinase_cat_dom"/>
</dbReference>
<dbReference type="InterPro" id="IPR015947">
    <property type="entry name" value="PUA-like_sf"/>
</dbReference>
<dbReference type="InterPro" id="IPR006700">
    <property type="entry name" value="RsmE"/>
</dbReference>
<dbReference type="InterPro" id="IPR046886">
    <property type="entry name" value="RsmE_MTase_dom"/>
</dbReference>
<dbReference type="InterPro" id="IPR046887">
    <property type="entry name" value="RsmE_PUA-like"/>
</dbReference>
<dbReference type="InterPro" id="IPR029026">
    <property type="entry name" value="tRNA_m1G_MTases_N"/>
</dbReference>
<dbReference type="NCBIfam" id="NF008697">
    <property type="entry name" value="PRK11713.4-1"/>
    <property type="match status" value="1"/>
</dbReference>
<dbReference type="NCBIfam" id="TIGR00046">
    <property type="entry name" value="RsmE family RNA methyltransferase"/>
    <property type="match status" value="1"/>
</dbReference>
<dbReference type="PANTHER" id="PTHR30027:SF3">
    <property type="entry name" value="16S RRNA (URACIL(1498)-N(3))-METHYLTRANSFERASE"/>
    <property type="match status" value="1"/>
</dbReference>
<dbReference type="PANTHER" id="PTHR30027">
    <property type="entry name" value="RIBOSOMAL RNA SMALL SUBUNIT METHYLTRANSFERASE E"/>
    <property type="match status" value="1"/>
</dbReference>
<dbReference type="Pfam" id="PF04452">
    <property type="entry name" value="Methyltrans_RNA"/>
    <property type="match status" value="1"/>
</dbReference>
<dbReference type="Pfam" id="PF20260">
    <property type="entry name" value="PUA_4"/>
    <property type="match status" value="1"/>
</dbReference>
<dbReference type="SMART" id="SM00046">
    <property type="entry name" value="DAGKc"/>
    <property type="match status" value="1"/>
</dbReference>
<dbReference type="SUPFAM" id="SSF75217">
    <property type="entry name" value="alpha/beta knot"/>
    <property type="match status" value="1"/>
</dbReference>
<dbReference type="SUPFAM" id="SSF88697">
    <property type="entry name" value="PUA domain-like"/>
    <property type="match status" value="1"/>
</dbReference>
<accession>P72667</accession>